<organism>
    <name type="scientific">Elusimicrobium minutum (strain Pei191)</name>
    <dbReference type="NCBI Taxonomy" id="445932"/>
    <lineage>
        <taxon>Bacteria</taxon>
        <taxon>Pseudomonadati</taxon>
        <taxon>Elusimicrobiota</taxon>
        <taxon>Elusimicrobia</taxon>
        <taxon>Elusimicrobiales</taxon>
        <taxon>Elusimicrobiaceae</taxon>
        <taxon>Elusimicrobium</taxon>
    </lineage>
</organism>
<proteinExistence type="inferred from homology"/>
<reference key="1">
    <citation type="journal article" date="2009" name="Appl. Environ. Microbiol.">
        <title>Genomic analysis of 'Elusimicrobium minutum,' the first cultivated representative of the phylum 'Elusimicrobia' (formerly termite group 1).</title>
        <authorList>
            <person name="Herlemann D.P.R."/>
            <person name="Geissinger O."/>
            <person name="Ikeda-Ohtsubo W."/>
            <person name="Kunin V."/>
            <person name="Sun H."/>
            <person name="Lapidus A."/>
            <person name="Hugenholtz P."/>
            <person name="Brune A."/>
        </authorList>
    </citation>
    <scope>NUCLEOTIDE SEQUENCE [LARGE SCALE GENOMIC DNA]</scope>
    <source>
        <strain>Pei191</strain>
    </source>
</reference>
<name>EFP_ELUMP</name>
<sequence length="186" mass="21388">MISTTDFKEGLIFENENGEIVEIVDYQHHRKSQARAVVRVKLRKLGSGSYVETSYRPEDKFKEVSVEKRPFMYLYSEGDMAHFMNNESYDQVAVPLDKLENQRKYLIENMECTGLYINDQLFDIVLPIKVVLTIKSTVPGVKGDTVSNLTKEAELETGVTIKVPLFINEGDKVIMDTRYCTYVERA</sequence>
<keyword id="KW-0963">Cytoplasm</keyword>
<keyword id="KW-0251">Elongation factor</keyword>
<keyword id="KW-0648">Protein biosynthesis</keyword>
<keyword id="KW-1185">Reference proteome</keyword>
<accession>B2KCP2</accession>
<feature type="chain" id="PRO_1000096153" description="Elongation factor P">
    <location>
        <begin position="1"/>
        <end position="186"/>
    </location>
</feature>
<gene>
    <name evidence="1" type="primary">efp</name>
    <name type="ordered locus">Emin_0733</name>
</gene>
<protein>
    <recommendedName>
        <fullName evidence="1">Elongation factor P</fullName>
        <shortName evidence="1">EF-P</shortName>
    </recommendedName>
</protein>
<evidence type="ECO:0000255" key="1">
    <source>
        <dbReference type="HAMAP-Rule" id="MF_00141"/>
    </source>
</evidence>
<dbReference type="EMBL" id="CP001055">
    <property type="protein sequence ID" value="ACC98288.1"/>
    <property type="molecule type" value="Genomic_DNA"/>
</dbReference>
<dbReference type="RefSeq" id="WP_012414903.1">
    <property type="nucleotide sequence ID" value="NC_010644.1"/>
</dbReference>
<dbReference type="SMR" id="B2KCP2"/>
<dbReference type="STRING" id="445932.Emin_0733"/>
<dbReference type="KEGG" id="emi:Emin_0733"/>
<dbReference type="HOGENOM" id="CLU_074944_0_1_0"/>
<dbReference type="OrthoDB" id="9801844at2"/>
<dbReference type="UniPathway" id="UPA00345"/>
<dbReference type="Proteomes" id="UP000001029">
    <property type="component" value="Chromosome"/>
</dbReference>
<dbReference type="GO" id="GO:0005737">
    <property type="term" value="C:cytoplasm"/>
    <property type="evidence" value="ECO:0007669"/>
    <property type="project" value="UniProtKB-SubCell"/>
</dbReference>
<dbReference type="GO" id="GO:0003746">
    <property type="term" value="F:translation elongation factor activity"/>
    <property type="evidence" value="ECO:0007669"/>
    <property type="project" value="UniProtKB-UniRule"/>
</dbReference>
<dbReference type="GO" id="GO:0043043">
    <property type="term" value="P:peptide biosynthetic process"/>
    <property type="evidence" value="ECO:0007669"/>
    <property type="project" value="InterPro"/>
</dbReference>
<dbReference type="CDD" id="cd04470">
    <property type="entry name" value="S1_EF-P_repeat_1"/>
    <property type="match status" value="1"/>
</dbReference>
<dbReference type="CDD" id="cd05794">
    <property type="entry name" value="S1_EF-P_repeat_2"/>
    <property type="match status" value="1"/>
</dbReference>
<dbReference type="FunFam" id="2.30.30.30:FF:000003">
    <property type="entry name" value="Elongation factor P"/>
    <property type="match status" value="1"/>
</dbReference>
<dbReference type="FunFam" id="2.40.50.140:FF:000004">
    <property type="entry name" value="Elongation factor P"/>
    <property type="match status" value="1"/>
</dbReference>
<dbReference type="FunFam" id="2.40.50.140:FF:000009">
    <property type="entry name" value="Elongation factor P"/>
    <property type="match status" value="1"/>
</dbReference>
<dbReference type="Gene3D" id="2.30.30.30">
    <property type="match status" value="1"/>
</dbReference>
<dbReference type="Gene3D" id="2.40.50.140">
    <property type="entry name" value="Nucleic acid-binding proteins"/>
    <property type="match status" value="2"/>
</dbReference>
<dbReference type="HAMAP" id="MF_00141">
    <property type="entry name" value="EF_P"/>
    <property type="match status" value="1"/>
</dbReference>
<dbReference type="InterPro" id="IPR015365">
    <property type="entry name" value="Elong-fact-P_C"/>
</dbReference>
<dbReference type="InterPro" id="IPR012340">
    <property type="entry name" value="NA-bd_OB-fold"/>
</dbReference>
<dbReference type="InterPro" id="IPR014722">
    <property type="entry name" value="Rib_uL2_dom2"/>
</dbReference>
<dbReference type="InterPro" id="IPR020599">
    <property type="entry name" value="Transl_elong_fac_P/YeiP"/>
</dbReference>
<dbReference type="InterPro" id="IPR013185">
    <property type="entry name" value="Transl_elong_KOW-like"/>
</dbReference>
<dbReference type="InterPro" id="IPR001059">
    <property type="entry name" value="Transl_elong_P/YeiP_cen"/>
</dbReference>
<dbReference type="InterPro" id="IPR013852">
    <property type="entry name" value="Transl_elong_P/YeiP_CS"/>
</dbReference>
<dbReference type="InterPro" id="IPR011768">
    <property type="entry name" value="Transl_elongation_fac_P"/>
</dbReference>
<dbReference type="InterPro" id="IPR008991">
    <property type="entry name" value="Translation_prot_SH3-like_sf"/>
</dbReference>
<dbReference type="NCBIfam" id="TIGR00038">
    <property type="entry name" value="efp"/>
    <property type="match status" value="1"/>
</dbReference>
<dbReference type="NCBIfam" id="NF001810">
    <property type="entry name" value="PRK00529.1"/>
    <property type="match status" value="1"/>
</dbReference>
<dbReference type="PANTHER" id="PTHR30053">
    <property type="entry name" value="ELONGATION FACTOR P"/>
    <property type="match status" value="1"/>
</dbReference>
<dbReference type="PANTHER" id="PTHR30053:SF12">
    <property type="entry name" value="ELONGATION FACTOR P (EF-P) FAMILY PROTEIN"/>
    <property type="match status" value="1"/>
</dbReference>
<dbReference type="Pfam" id="PF01132">
    <property type="entry name" value="EFP"/>
    <property type="match status" value="1"/>
</dbReference>
<dbReference type="Pfam" id="PF08207">
    <property type="entry name" value="EFP_N"/>
    <property type="match status" value="1"/>
</dbReference>
<dbReference type="Pfam" id="PF09285">
    <property type="entry name" value="Elong-fact-P_C"/>
    <property type="match status" value="1"/>
</dbReference>
<dbReference type="PIRSF" id="PIRSF005901">
    <property type="entry name" value="EF-P"/>
    <property type="match status" value="1"/>
</dbReference>
<dbReference type="SMART" id="SM01185">
    <property type="entry name" value="EFP"/>
    <property type="match status" value="1"/>
</dbReference>
<dbReference type="SMART" id="SM00841">
    <property type="entry name" value="Elong-fact-P_C"/>
    <property type="match status" value="1"/>
</dbReference>
<dbReference type="SUPFAM" id="SSF50249">
    <property type="entry name" value="Nucleic acid-binding proteins"/>
    <property type="match status" value="2"/>
</dbReference>
<dbReference type="SUPFAM" id="SSF50104">
    <property type="entry name" value="Translation proteins SH3-like domain"/>
    <property type="match status" value="1"/>
</dbReference>
<dbReference type="PROSITE" id="PS01275">
    <property type="entry name" value="EFP"/>
    <property type="match status" value="1"/>
</dbReference>
<comment type="function">
    <text evidence="1">Involved in peptide bond synthesis. Stimulates efficient translation and peptide-bond synthesis on native or reconstituted 70S ribosomes in vitro. Probably functions indirectly by altering the affinity of the ribosome for aminoacyl-tRNA, thus increasing their reactivity as acceptors for peptidyl transferase.</text>
</comment>
<comment type="pathway">
    <text evidence="1">Protein biosynthesis; polypeptide chain elongation.</text>
</comment>
<comment type="subcellular location">
    <subcellularLocation>
        <location evidence="1">Cytoplasm</location>
    </subcellularLocation>
</comment>
<comment type="similarity">
    <text evidence="1">Belongs to the elongation factor P family.</text>
</comment>